<reference key="1">
    <citation type="journal article" date="2016" name="Stand. Genomic Sci.">
        <title>Complete genome sequence of the Antarctic Halorubrum lacusprofundi type strain ACAM 34.</title>
        <authorList>
            <person name="Anderson I.J."/>
            <person name="DasSarma P."/>
            <person name="Lucas S."/>
            <person name="Copeland A."/>
            <person name="Lapidus A."/>
            <person name="Del Rio T.G."/>
            <person name="Tice H."/>
            <person name="Dalin E."/>
            <person name="Bruce D.C."/>
            <person name="Goodwin L."/>
            <person name="Pitluck S."/>
            <person name="Sims D."/>
            <person name="Brettin T.S."/>
            <person name="Detter J.C."/>
            <person name="Han C.S."/>
            <person name="Larimer F."/>
            <person name="Hauser L."/>
            <person name="Land M."/>
            <person name="Ivanova N."/>
            <person name="Richardson P."/>
            <person name="Cavicchioli R."/>
            <person name="DasSarma S."/>
            <person name="Woese C.R."/>
            <person name="Kyrpides N.C."/>
        </authorList>
    </citation>
    <scope>NUCLEOTIDE SEQUENCE [LARGE SCALE GENOMIC DNA]</scope>
    <source>
        <strain>ATCC 49239 / DSM 5036 / JCM 8891 / ACAM 34</strain>
    </source>
</reference>
<accession>B9LS95</accession>
<sequence>MDDLEAVLSRVRDRAVPEPAERDRLRTVAVELADRTREAIADLPVDADVVQVGSTARDTWVSGDRDIDLFVRFDAALDREQLEEYGLAVGHAVLPDGHEEYAEHPYVKGTYEGFDVDLVPCHDVETAGDLISAVDRTPFHDAYLSARLDEGLADDVVLAKAFLKGIGAYGSDLRTEGFSGYLTELLVLELGGFVPLVESARSWHPPVEFDPEGHAERTFDDPLVVVDPTDPTRNVAAVLSAENLARFQHYARELLAAPSEAPFEPVDPAPLDPTDVRDHLDRRETTPVAVVFDAPDLVDDQLWPQLRRSLDGIVRGLNDRGFDVLRARAMTDGSGPEADGDGAKRAALYAELEVAERPAVTRHEGPPVAVRKHAASFYESYADDVDPETYGPFIDGDRYVVEREREFTTVREYLESDAAGDVALGAQVEREFAERDVLVGDAVATLAPAFGVPLREFYEPHP</sequence>
<organism>
    <name type="scientific">Halorubrum lacusprofundi (strain ATCC 49239 / DSM 5036 / JCM 8891 / ACAM 34)</name>
    <dbReference type="NCBI Taxonomy" id="416348"/>
    <lineage>
        <taxon>Archaea</taxon>
        <taxon>Methanobacteriati</taxon>
        <taxon>Methanobacteriota</taxon>
        <taxon>Stenosarchaea group</taxon>
        <taxon>Halobacteria</taxon>
        <taxon>Halobacteriales</taxon>
        <taxon>Haloferacaceae</taxon>
        <taxon>Halorubrum</taxon>
    </lineage>
</organism>
<keyword id="KW-0067">ATP-binding</keyword>
<keyword id="KW-0460">Magnesium</keyword>
<keyword id="KW-0479">Metal-binding</keyword>
<keyword id="KW-0547">Nucleotide-binding</keyword>
<keyword id="KW-0548">Nucleotidyltransferase</keyword>
<keyword id="KW-1185">Reference proteome</keyword>
<keyword id="KW-0692">RNA repair</keyword>
<keyword id="KW-0694">RNA-binding</keyword>
<keyword id="KW-0808">Transferase</keyword>
<keyword id="KW-0819">tRNA processing</keyword>
<proteinExistence type="inferred from homology"/>
<name>CCA_HALLT</name>
<dbReference type="EC" id="2.7.7.72" evidence="1"/>
<dbReference type="EMBL" id="CP001365">
    <property type="protein sequence ID" value="ACM55940.1"/>
    <property type="molecule type" value="Genomic_DNA"/>
</dbReference>
<dbReference type="RefSeq" id="WP_012659581.1">
    <property type="nucleotide sequence ID" value="NC_012029.1"/>
</dbReference>
<dbReference type="SMR" id="B9LS95"/>
<dbReference type="GeneID" id="7399728"/>
<dbReference type="KEGG" id="hla:Hlac_0336"/>
<dbReference type="eggNOG" id="arCOG04249">
    <property type="taxonomic scope" value="Archaea"/>
</dbReference>
<dbReference type="HOGENOM" id="CLU_044679_0_0_2"/>
<dbReference type="Proteomes" id="UP000000740">
    <property type="component" value="Chromosome 1"/>
</dbReference>
<dbReference type="GO" id="GO:0005524">
    <property type="term" value="F:ATP binding"/>
    <property type="evidence" value="ECO:0007669"/>
    <property type="project" value="UniProtKB-UniRule"/>
</dbReference>
<dbReference type="GO" id="GO:0004810">
    <property type="term" value="F:CCA tRNA nucleotidyltransferase activity"/>
    <property type="evidence" value="ECO:0007669"/>
    <property type="project" value="UniProtKB-UniRule"/>
</dbReference>
<dbReference type="GO" id="GO:0000287">
    <property type="term" value="F:magnesium ion binding"/>
    <property type="evidence" value="ECO:0007669"/>
    <property type="project" value="UniProtKB-UniRule"/>
</dbReference>
<dbReference type="GO" id="GO:0000049">
    <property type="term" value="F:tRNA binding"/>
    <property type="evidence" value="ECO:0007669"/>
    <property type="project" value="UniProtKB-UniRule"/>
</dbReference>
<dbReference type="GO" id="GO:0042245">
    <property type="term" value="P:RNA repair"/>
    <property type="evidence" value="ECO:0007669"/>
    <property type="project" value="UniProtKB-KW"/>
</dbReference>
<dbReference type="GO" id="GO:0001680">
    <property type="term" value="P:tRNA 3'-terminal CCA addition"/>
    <property type="evidence" value="ECO:0007669"/>
    <property type="project" value="UniProtKB-UniRule"/>
</dbReference>
<dbReference type="CDD" id="cd05400">
    <property type="entry name" value="NT_2-5OAS_ClassI-CCAase"/>
    <property type="match status" value="1"/>
</dbReference>
<dbReference type="Gene3D" id="3.30.70.1550">
    <property type="entry name" value="Archaeal tRNA CCA-adding enzyme catalytic domain"/>
    <property type="match status" value="1"/>
</dbReference>
<dbReference type="Gene3D" id="3.30.460.10">
    <property type="entry name" value="Beta Polymerase, domain 2"/>
    <property type="match status" value="1"/>
</dbReference>
<dbReference type="Gene3D" id="1.10.1410.30">
    <property type="entry name" value="CCA tRNA nucleotidyltransferase, domain 2"/>
    <property type="match status" value="1"/>
</dbReference>
<dbReference type="Gene3D" id="3.30.70.590">
    <property type="entry name" value="Poly(A) polymerase predicted RNA binding domain"/>
    <property type="match status" value="1"/>
</dbReference>
<dbReference type="HAMAP" id="MF_01264">
    <property type="entry name" value="CCA_arch"/>
    <property type="match status" value="1"/>
</dbReference>
<dbReference type="InterPro" id="IPR048833">
    <property type="entry name" value="CAA_C"/>
</dbReference>
<dbReference type="InterPro" id="IPR008229">
    <property type="entry name" value="CCA-adding_arc"/>
</dbReference>
<dbReference type="InterPro" id="IPR042090">
    <property type="entry name" value="CCA_tRNA_nucleotrans_2"/>
</dbReference>
<dbReference type="InterPro" id="IPR006116">
    <property type="entry name" value="NT_2-5OAS_ClassI-CCAase"/>
</dbReference>
<dbReference type="InterPro" id="IPR043519">
    <property type="entry name" value="NT_sf"/>
</dbReference>
<dbReference type="InterPro" id="IPR011068">
    <property type="entry name" value="NuclTrfase_I-like_C"/>
</dbReference>
<dbReference type="InterPro" id="IPR002934">
    <property type="entry name" value="Polymerase_NTP_transf_dom"/>
</dbReference>
<dbReference type="InterPro" id="IPR015329">
    <property type="entry name" value="tRNA_NucTransf2"/>
</dbReference>
<dbReference type="NCBIfam" id="TIGR03671">
    <property type="entry name" value="cca_archaeal"/>
    <property type="match status" value="1"/>
</dbReference>
<dbReference type="PANTHER" id="PTHR39643">
    <property type="entry name" value="CCA-ADDING ENZYME"/>
    <property type="match status" value="1"/>
</dbReference>
<dbReference type="PANTHER" id="PTHR39643:SF1">
    <property type="entry name" value="CCA-ADDING ENZYME"/>
    <property type="match status" value="1"/>
</dbReference>
<dbReference type="Pfam" id="PF21133">
    <property type="entry name" value="CAA_C"/>
    <property type="match status" value="1"/>
</dbReference>
<dbReference type="Pfam" id="PF01909">
    <property type="entry name" value="NTP_transf_2"/>
    <property type="match status" value="1"/>
</dbReference>
<dbReference type="Pfam" id="PF09249">
    <property type="entry name" value="tRNA_NucTransf2"/>
    <property type="match status" value="1"/>
</dbReference>
<dbReference type="PIRSF" id="PIRSF005335">
    <property type="entry name" value="CCA_arch"/>
    <property type="match status" value="1"/>
</dbReference>
<dbReference type="SUPFAM" id="SSF81301">
    <property type="entry name" value="Nucleotidyltransferase"/>
    <property type="match status" value="1"/>
</dbReference>
<dbReference type="SUPFAM" id="SSF55003">
    <property type="entry name" value="PAP/Archaeal CCA-adding enzyme, C-terminal domain"/>
    <property type="match status" value="1"/>
</dbReference>
<dbReference type="SUPFAM" id="SSF81631">
    <property type="entry name" value="PAP/OAS1 substrate-binding domain"/>
    <property type="match status" value="1"/>
</dbReference>
<protein>
    <recommendedName>
        <fullName evidence="1">CCA-adding enzyme</fullName>
        <ecNumber evidence="1">2.7.7.72</ecNumber>
    </recommendedName>
    <alternativeName>
        <fullName evidence="1">CCA tRNA nucleotidyltransferase</fullName>
    </alternativeName>
    <alternativeName>
        <fullName evidence="1">tRNA CCA-pyrophosphorylase</fullName>
    </alternativeName>
    <alternativeName>
        <fullName evidence="1">tRNA adenylyl-/cytidylyl- transferase</fullName>
    </alternativeName>
    <alternativeName>
        <fullName evidence="1">tRNA nucleotidyltransferase</fullName>
    </alternativeName>
    <alternativeName>
        <fullName evidence="1">tRNA-NT</fullName>
    </alternativeName>
</protein>
<gene>
    <name evidence="1" type="primary">cca</name>
    <name type="ordered locus">Hlac_0336</name>
</gene>
<comment type="function">
    <text evidence="1">Catalyzes the addition and repair of the essential 3'-terminal CCA sequence in tRNAs without using a nucleic acid template. Adds these three nucleotides in the order of C, C, and A to the tRNA nucleotide-73, using CTP and ATP as substrates and producing inorganic pyrophosphate. tRNA 3'-terminal CCA addition is required both for tRNA processing and repair. Also involved in tRNA surveillance by mediating tandem CCA addition to generate a CCACCA at the 3' terminus of unstable tRNAs. While stable tRNAs receive only 3'-terminal CCA, unstable tRNAs are marked with CCACCA and rapidly degraded.</text>
</comment>
<comment type="catalytic activity">
    <reaction evidence="1">
        <text>a tRNA precursor + 2 CTP + ATP = a tRNA with a 3' CCA end + 3 diphosphate</text>
        <dbReference type="Rhea" id="RHEA:14433"/>
        <dbReference type="Rhea" id="RHEA-COMP:10465"/>
        <dbReference type="Rhea" id="RHEA-COMP:10468"/>
        <dbReference type="ChEBI" id="CHEBI:30616"/>
        <dbReference type="ChEBI" id="CHEBI:33019"/>
        <dbReference type="ChEBI" id="CHEBI:37563"/>
        <dbReference type="ChEBI" id="CHEBI:74896"/>
        <dbReference type="ChEBI" id="CHEBI:83071"/>
        <dbReference type="EC" id="2.7.7.72"/>
    </reaction>
</comment>
<comment type="catalytic activity">
    <reaction evidence="1">
        <text>a tRNA with a 3' CCA end + 2 CTP + ATP = a tRNA with a 3' CCACCA end + 3 diphosphate</text>
        <dbReference type="Rhea" id="RHEA:76235"/>
        <dbReference type="Rhea" id="RHEA-COMP:10468"/>
        <dbReference type="Rhea" id="RHEA-COMP:18655"/>
        <dbReference type="ChEBI" id="CHEBI:30616"/>
        <dbReference type="ChEBI" id="CHEBI:33019"/>
        <dbReference type="ChEBI" id="CHEBI:37563"/>
        <dbReference type="ChEBI" id="CHEBI:83071"/>
        <dbReference type="ChEBI" id="CHEBI:195187"/>
    </reaction>
    <physiologicalReaction direction="left-to-right" evidence="1">
        <dbReference type="Rhea" id="RHEA:76236"/>
    </physiologicalReaction>
</comment>
<comment type="cofactor">
    <cofactor evidence="1">
        <name>Mg(2+)</name>
        <dbReference type="ChEBI" id="CHEBI:18420"/>
    </cofactor>
</comment>
<comment type="subunit">
    <text evidence="1">Homodimer.</text>
</comment>
<comment type="miscellaneous">
    <text evidence="1">A single active site specifically recognizes both ATP and CTP and is responsible for their addition.</text>
</comment>
<comment type="similarity">
    <text evidence="1">Belongs to the tRNA nucleotidyltransferase/poly(A) polymerase family. Archaeal CCA-adding enzyme subfamily.</text>
</comment>
<feature type="chain" id="PRO_1000165136" description="CCA-adding enzyme">
    <location>
        <begin position="1"/>
        <end position="462"/>
    </location>
</feature>
<feature type="binding site" evidence="1">
    <location>
        <position position="54"/>
    </location>
    <ligand>
        <name>ATP</name>
        <dbReference type="ChEBI" id="CHEBI:30616"/>
    </ligand>
</feature>
<feature type="binding site" evidence="1">
    <location>
        <position position="54"/>
    </location>
    <ligand>
        <name>CTP</name>
        <dbReference type="ChEBI" id="CHEBI:37563"/>
    </ligand>
</feature>
<feature type="binding site" evidence="1">
    <location>
        <position position="57"/>
    </location>
    <ligand>
        <name>ATP</name>
        <dbReference type="ChEBI" id="CHEBI:30616"/>
    </ligand>
</feature>
<feature type="binding site" evidence="1">
    <location>
        <position position="57"/>
    </location>
    <ligand>
        <name>CTP</name>
        <dbReference type="ChEBI" id="CHEBI:37563"/>
    </ligand>
</feature>
<feature type="binding site" evidence="1">
    <location>
        <position position="66"/>
    </location>
    <ligand>
        <name>Mg(2+)</name>
        <dbReference type="ChEBI" id="CHEBI:18420"/>
    </ligand>
</feature>
<feature type="binding site" evidence="1">
    <location>
        <position position="68"/>
    </location>
    <ligand>
        <name>Mg(2+)</name>
        <dbReference type="ChEBI" id="CHEBI:18420"/>
    </ligand>
</feature>
<feature type="binding site" evidence="1">
    <location>
        <position position="117"/>
    </location>
    <ligand>
        <name>Mg(2+)</name>
        <dbReference type="ChEBI" id="CHEBI:18420"/>
    </ligand>
</feature>
<feature type="binding site" evidence="1">
    <location>
        <position position="140"/>
    </location>
    <ligand>
        <name>ATP</name>
        <dbReference type="ChEBI" id="CHEBI:30616"/>
    </ligand>
</feature>
<feature type="binding site" evidence="1">
    <location>
        <position position="140"/>
    </location>
    <ligand>
        <name>CTP</name>
        <dbReference type="ChEBI" id="CHEBI:37563"/>
    </ligand>
</feature>
<feature type="binding site" evidence="1">
    <location>
        <position position="160"/>
    </location>
    <ligand>
        <name>ATP</name>
        <dbReference type="ChEBI" id="CHEBI:30616"/>
    </ligand>
</feature>
<feature type="binding site" evidence="1">
    <location>
        <position position="160"/>
    </location>
    <ligand>
        <name>CTP</name>
        <dbReference type="ChEBI" id="CHEBI:37563"/>
    </ligand>
</feature>
<feature type="binding site" evidence="1">
    <location>
        <position position="169"/>
    </location>
    <ligand>
        <name>ATP</name>
        <dbReference type="ChEBI" id="CHEBI:30616"/>
    </ligand>
</feature>
<feature type="binding site" evidence="1">
    <location>
        <position position="169"/>
    </location>
    <ligand>
        <name>CTP</name>
        <dbReference type="ChEBI" id="CHEBI:37563"/>
    </ligand>
</feature>
<evidence type="ECO:0000255" key="1">
    <source>
        <dbReference type="HAMAP-Rule" id="MF_01264"/>
    </source>
</evidence>